<keyword id="KW-0687">Ribonucleoprotein</keyword>
<keyword id="KW-0689">Ribosomal protein</keyword>
<reference key="1">
    <citation type="submission" date="2007-06" db="EMBL/GenBank/DDBJ databases">
        <authorList>
            <person name="Dodson R.J."/>
            <person name="Harkins D."/>
            <person name="Paulsen I.T."/>
        </authorList>
    </citation>
    <scope>NUCLEOTIDE SEQUENCE [LARGE SCALE GENOMIC DNA]</scope>
    <source>
        <strain>DSM 24068 / PA7</strain>
    </source>
</reference>
<sequence length="142" mass="16056">MKTYTAKPETVQRDWFVVDAAGQTLGRLATEIARRLRGKHKPEYTPHVDTGDYIVVINAEQVRVTGAKTTDKMYYHHSGFPGGIKSINFEKLIAKAPERVIETAVKGMLPKNPLGRDMYRKLKVYKGANHPHTAQQPQELKI</sequence>
<accession>A6VBA6</accession>
<organism>
    <name type="scientific">Pseudomonas paraeruginosa (strain DSM 24068 / PA7)</name>
    <name type="common">Pseudomonas aeruginosa (strain PA7)</name>
    <dbReference type="NCBI Taxonomy" id="381754"/>
    <lineage>
        <taxon>Bacteria</taxon>
        <taxon>Pseudomonadati</taxon>
        <taxon>Pseudomonadota</taxon>
        <taxon>Gammaproteobacteria</taxon>
        <taxon>Pseudomonadales</taxon>
        <taxon>Pseudomonadaceae</taxon>
        <taxon>Pseudomonas</taxon>
        <taxon>Pseudomonas paraeruginosa</taxon>
    </lineage>
</organism>
<gene>
    <name evidence="1" type="primary">rplM</name>
    <name type="ordered locus">PSPA7_5005</name>
</gene>
<proteinExistence type="inferred from homology"/>
<protein>
    <recommendedName>
        <fullName evidence="1">Large ribosomal subunit protein uL13</fullName>
    </recommendedName>
    <alternativeName>
        <fullName evidence="2">50S ribosomal protein L13</fullName>
    </alternativeName>
</protein>
<dbReference type="EMBL" id="CP000744">
    <property type="protein sequence ID" value="ABR81686.1"/>
    <property type="molecule type" value="Genomic_DNA"/>
</dbReference>
<dbReference type="RefSeq" id="WP_003150423.1">
    <property type="nucleotide sequence ID" value="NC_009656.1"/>
</dbReference>
<dbReference type="SMR" id="A6VBA6"/>
<dbReference type="GeneID" id="77222934"/>
<dbReference type="KEGG" id="pap:PSPA7_5005"/>
<dbReference type="HOGENOM" id="CLU_082184_2_2_6"/>
<dbReference type="Proteomes" id="UP000001582">
    <property type="component" value="Chromosome"/>
</dbReference>
<dbReference type="GO" id="GO:0022625">
    <property type="term" value="C:cytosolic large ribosomal subunit"/>
    <property type="evidence" value="ECO:0007669"/>
    <property type="project" value="TreeGrafter"/>
</dbReference>
<dbReference type="GO" id="GO:0003729">
    <property type="term" value="F:mRNA binding"/>
    <property type="evidence" value="ECO:0007669"/>
    <property type="project" value="TreeGrafter"/>
</dbReference>
<dbReference type="GO" id="GO:0003735">
    <property type="term" value="F:structural constituent of ribosome"/>
    <property type="evidence" value="ECO:0007669"/>
    <property type="project" value="InterPro"/>
</dbReference>
<dbReference type="GO" id="GO:0017148">
    <property type="term" value="P:negative regulation of translation"/>
    <property type="evidence" value="ECO:0007669"/>
    <property type="project" value="TreeGrafter"/>
</dbReference>
<dbReference type="GO" id="GO:0006412">
    <property type="term" value="P:translation"/>
    <property type="evidence" value="ECO:0007669"/>
    <property type="project" value="UniProtKB-UniRule"/>
</dbReference>
<dbReference type="CDD" id="cd00392">
    <property type="entry name" value="Ribosomal_L13"/>
    <property type="match status" value="1"/>
</dbReference>
<dbReference type="FunFam" id="3.90.1180.10:FF:000001">
    <property type="entry name" value="50S ribosomal protein L13"/>
    <property type="match status" value="1"/>
</dbReference>
<dbReference type="Gene3D" id="3.90.1180.10">
    <property type="entry name" value="Ribosomal protein L13"/>
    <property type="match status" value="1"/>
</dbReference>
<dbReference type="HAMAP" id="MF_01366">
    <property type="entry name" value="Ribosomal_uL13"/>
    <property type="match status" value="1"/>
</dbReference>
<dbReference type="InterPro" id="IPR005822">
    <property type="entry name" value="Ribosomal_uL13"/>
</dbReference>
<dbReference type="InterPro" id="IPR005823">
    <property type="entry name" value="Ribosomal_uL13_bac-type"/>
</dbReference>
<dbReference type="InterPro" id="IPR023563">
    <property type="entry name" value="Ribosomal_uL13_CS"/>
</dbReference>
<dbReference type="InterPro" id="IPR036899">
    <property type="entry name" value="Ribosomal_uL13_sf"/>
</dbReference>
<dbReference type="NCBIfam" id="TIGR01066">
    <property type="entry name" value="rplM_bact"/>
    <property type="match status" value="1"/>
</dbReference>
<dbReference type="PANTHER" id="PTHR11545:SF2">
    <property type="entry name" value="LARGE RIBOSOMAL SUBUNIT PROTEIN UL13M"/>
    <property type="match status" value="1"/>
</dbReference>
<dbReference type="PANTHER" id="PTHR11545">
    <property type="entry name" value="RIBOSOMAL PROTEIN L13"/>
    <property type="match status" value="1"/>
</dbReference>
<dbReference type="Pfam" id="PF00572">
    <property type="entry name" value="Ribosomal_L13"/>
    <property type="match status" value="1"/>
</dbReference>
<dbReference type="PIRSF" id="PIRSF002181">
    <property type="entry name" value="Ribosomal_L13"/>
    <property type="match status" value="1"/>
</dbReference>
<dbReference type="SUPFAM" id="SSF52161">
    <property type="entry name" value="Ribosomal protein L13"/>
    <property type="match status" value="1"/>
</dbReference>
<dbReference type="PROSITE" id="PS00783">
    <property type="entry name" value="RIBOSOMAL_L13"/>
    <property type="match status" value="1"/>
</dbReference>
<feature type="chain" id="PRO_1000055443" description="Large ribosomal subunit protein uL13">
    <location>
        <begin position="1"/>
        <end position="142"/>
    </location>
</feature>
<evidence type="ECO:0000255" key="1">
    <source>
        <dbReference type="HAMAP-Rule" id="MF_01366"/>
    </source>
</evidence>
<evidence type="ECO:0000305" key="2"/>
<name>RL13_PSEP7</name>
<comment type="function">
    <text evidence="1">This protein is one of the early assembly proteins of the 50S ribosomal subunit, although it is not seen to bind rRNA by itself. It is important during the early stages of 50S assembly.</text>
</comment>
<comment type="subunit">
    <text evidence="1">Part of the 50S ribosomal subunit.</text>
</comment>
<comment type="similarity">
    <text evidence="1">Belongs to the universal ribosomal protein uL13 family.</text>
</comment>